<organism>
    <name type="scientific">Callorhinchus milii</name>
    <name type="common">Ghost shark</name>
    <dbReference type="NCBI Taxonomy" id="7868"/>
    <lineage>
        <taxon>Eukaryota</taxon>
        <taxon>Metazoa</taxon>
        <taxon>Chordata</taxon>
        <taxon>Craniata</taxon>
        <taxon>Vertebrata</taxon>
        <taxon>Chondrichthyes</taxon>
        <taxon>Holocephali</taxon>
        <taxon>Chimaeriformes</taxon>
        <taxon>Callorhinchidae</taxon>
        <taxon>Callorhinchus</taxon>
    </lineage>
</organism>
<dbReference type="PIR" id="S06130">
    <property type="entry name" value="GCEN"/>
</dbReference>
<dbReference type="SMR" id="P13189"/>
<dbReference type="STRING" id="7868.ENSCMIP00000014233"/>
<dbReference type="InParanoid" id="P13189"/>
<dbReference type="Proteomes" id="UP000314986">
    <property type="component" value="Unassembled WGS sequence"/>
</dbReference>
<dbReference type="GO" id="GO:0005615">
    <property type="term" value="C:extracellular space"/>
    <property type="evidence" value="ECO:0007669"/>
    <property type="project" value="TreeGrafter"/>
</dbReference>
<dbReference type="GO" id="GO:0031769">
    <property type="term" value="F:glucagon receptor binding"/>
    <property type="evidence" value="ECO:0007669"/>
    <property type="project" value="TreeGrafter"/>
</dbReference>
<dbReference type="GO" id="GO:0005179">
    <property type="term" value="F:hormone activity"/>
    <property type="evidence" value="ECO:0007669"/>
    <property type="project" value="UniProtKB-KW"/>
</dbReference>
<dbReference type="GO" id="GO:0007188">
    <property type="term" value="P:adenylate cyclase-modulating G protein-coupled receptor signaling pathway"/>
    <property type="evidence" value="ECO:0007669"/>
    <property type="project" value="TreeGrafter"/>
</dbReference>
<dbReference type="GO" id="GO:0043066">
    <property type="term" value="P:negative regulation of apoptotic process"/>
    <property type="evidence" value="ECO:0007669"/>
    <property type="project" value="TreeGrafter"/>
</dbReference>
<dbReference type="GO" id="GO:0035774">
    <property type="term" value="P:positive regulation of insulin secretion involved in cellular response to glucose stimulus"/>
    <property type="evidence" value="ECO:0007669"/>
    <property type="project" value="TreeGrafter"/>
</dbReference>
<dbReference type="GO" id="GO:0010737">
    <property type="term" value="P:protein kinase A signaling"/>
    <property type="evidence" value="ECO:0007669"/>
    <property type="project" value="TreeGrafter"/>
</dbReference>
<dbReference type="Gene3D" id="6.10.250.590">
    <property type="match status" value="1"/>
</dbReference>
<dbReference type="InterPro" id="IPR015550">
    <property type="entry name" value="Glucagon"/>
</dbReference>
<dbReference type="InterPro" id="IPR000532">
    <property type="entry name" value="Glucagon_GIP_secretin_VIP"/>
</dbReference>
<dbReference type="PANTHER" id="PTHR11418">
    <property type="entry name" value="GLUCAGON"/>
    <property type="match status" value="1"/>
</dbReference>
<dbReference type="PANTHER" id="PTHR11418:SF0">
    <property type="entry name" value="PRO-GLUCAGON"/>
    <property type="match status" value="1"/>
</dbReference>
<dbReference type="Pfam" id="PF00123">
    <property type="entry name" value="Hormone_2"/>
    <property type="match status" value="1"/>
</dbReference>
<dbReference type="PRINTS" id="PR00275">
    <property type="entry name" value="GLUCAGON"/>
</dbReference>
<dbReference type="SMART" id="SM00070">
    <property type="entry name" value="GLUCA"/>
    <property type="match status" value="1"/>
</dbReference>
<dbReference type="PROSITE" id="PS00260">
    <property type="entry name" value="GLUCAGON"/>
    <property type="match status" value="1"/>
</dbReference>
<protein>
    <recommendedName>
        <fullName>Glucagon</fullName>
    </recommendedName>
</protein>
<keyword id="KW-0903">Direct protein sequencing</keyword>
<keyword id="KW-0372">Hormone</keyword>
<keyword id="KW-1185">Reference proteome</keyword>
<keyword id="KW-0964">Secreted</keyword>
<reference key="1">
    <citation type="journal article" date="1989" name="Biochem. J.">
        <title>Isolation and structural characterization of insulin and glucagon from the holocephalan species Callorhynchus milii (elephantfish).</title>
        <authorList>
            <person name="Berks B.C."/>
            <person name="Marshall C.J."/>
            <person name="Carne A."/>
            <person name="Galloway S.M."/>
            <person name="Cutfield J.F."/>
        </authorList>
    </citation>
    <scope>PROTEIN SEQUENCE</scope>
</reference>
<sequence>HSEGTFSSDYSKYLDSRRAKDFVQWLMST</sequence>
<feature type="peptide" id="PRO_0000043925" description="Glucagon">
    <location>
        <begin position="1"/>
        <end position="29"/>
    </location>
</feature>
<comment type="function">
    <text>Glucagon plays a key role in glucose metabolism and homeostasis. Regulates blood glucose by increasing gluconeogenesis and decreasing glycolysis.</text>
</comment>
<comment type="subcellular location">
    <subcellularLocation>
        <location>Secreted</location>
    </subcellularLocation>
</comment>
<comment type="induction">
    <text>Produced in the A cells of the islets of Langerhans in response to a drop in blood sugar concentration.</text>
</comment>
<comment type="similarity">
    <text evidence="1">Belongs to the glucagon family.</text>
</comment>
<accession>P13189</accession>
<gene>
    <name type="primary">gcg</name>
</gene>
<proteinExistence type="evidence at protein level"/>
<name>GLUC_CALMI</name>
<evidence type="ECO:0000305" key="1"/>